<accession>Q16AB5</accession>
<keyword id="KW-0997">Cell inner membrane</keyword>
<keyword id="KW-1003">Cell membrane</keyword>
<keyword id="KW-0407">Ion channel</keyword>
<keyword id="KW-0406">Ion transport</keyword>
<keyword id="KW-0472">Membrane</keyword>
<keyword id="KW-0479">Metal-binding</keyword>
<keyword id="KW-1185">Reference proteome</keyword>
<keyword id="KW-0915">Sodium</keyword>
<keyword id="KW-0812">Transmembrane</keyword>
<keyword id="KW-1133">Transmembrane helix</keyword>
<keyword id="KW-0813">Transport</keyword>
<name>FLUC_ROSDO</name>
<organism>
    <name type="scientific">Roseobacter denitrificans (strain ATCC 33942 / OCh 114)</name>
    <name type="common">Erythrobacter sp. (strain OCh 114)</name>
    <name type="synonym">Roseobacter denitrificans</name>
    <dbReference type="NCBI Taxonomy" id="375451"/>
    <lineage>
        <taxon>Bacteria</taxon>
        <taxon>Pseudomonadati</taxon>
        <taxon>Pseudomonadota</taxon>
        <taxon>Alphaproteobacteria</taxon>
        <taxon>Rhodobacterales</taxon>
        <taxon>Roseobacteraceae</taxon>
        <taxon>Roseobacter</taxon>
    </lineage>
</organism>
<protein>
    <recommendedName>
        <fullName evidence="1">Fluoride-specific ion channel FluC</fullName>
    </recommendedName>
</protein>
<sequence length="126" mass="13149">MKSLILVAAGGAIGASLRYLLGAGVYRLTGGPTGFPVAIMMANVLGSIAMGFFVVWAAHRGLTHLSPFVMTGVLGGFTTFSAFSLETVTLFERGEIWQAGLYVALSVGLSVFGLMAGLWVARGVYL</sequence>
<comment type="function">
    <text evidence="1">Fluoride-specific ion channel. Important for reducing fluoride concentration in the cell, thus reducing its toxicity.</text>
</comment>
<comment type="catalytic activity">
    <reaction evidence="1">
        <text>fluoride(in) = fluoride(out)</text>
        <dbReference type="Rhea" id="RHEA:76159"/>
        <dbReference type="ChEBI" id="CHEBI:17051"/>
    </reaction>
    <physiologicalReaction direction="left-to-right" evidence="1">
        <dbReference type="Rhea" id="RHEA:76160"/>
    </physiologicalReaction>
</comment>
<comment type="activity regulation">
    <text evidence="1">Na(+) is not transported, but it plays an essential structural role and its presence is essential for fluoride channel function.</text>
</comment>
<comment type="subcellular location">
    <subcellularLocation>
        <location evidence="1">Cell inner membrane</location>
        <topology evidence="1">Multi-pass membrane protein</topology>
    </subcellularLocation>
</comment>
<comment type="similarity">
    <text evidence="1">Belongs to the fluoride channel Fluc/FEX (TC 1.A.43) family.</text>
</comment>
<comment type="sequence caution" evidence="2">
    <conflict type="erroneous initiation">
        <sequence resource="EMBL-CDS" id="ABG31078"/>
    </conflict>
</comment>
<feature type="chain" id="PRO_0000252931" description="Fluoride-specific ion channel FluC">
    <location>
        <begin position="1"/>
        <end position="126"/>
    </location>
</feature>
<feature type="transmembrane region" description="Helical" evidence="1">
    <location>
        <begin position="5"/>
        <end position="25"/>
    </location>
</feature>
<feature type="transmembrane region" description="Helical" evidence="1">
    <location>
        <begin position="37"/>
        <end position="57"/>
    </location>
</feature>
<feature type="transmembrane region" description="Helical" evidence="1">
    <location>
        <begin position="65"/>
        <end position="85"/>
    </location>
</feature>
<feature type="transmembrane region" description="Helical" evidence="1">
    <location>
        <begin position="101"/>
        <end position="121"/>
    </location>
</feature>
<feature type="binding site" evidence="1">
    <location>
        <position position="75"/>
    </location>
    <ligand>
        <name>Na(+)</name>
        <dbReference type="ChEBI" id="CHEBI:29101"/>
        <note>structural</note>
    </ligand>
</feature>
<feature type="binding site" evidence="1">
    <location>
        <position position="78"/>
    </location>
    <ligand>
        <name>Na(+)</name>
        <dbReference type="ChEBI" id="CHEBI:29101"/>
        <note>structural</note>
    </ligand>
</feature>
<evidence type="ECO:0000255" key="1">
    <source>
        <dbReference type="HAMAP-Rule" id="MF_00454"/>
    </source>
</evidence>
<evidence type="ECO:0000305" key="2"/>
<reference key="1">
    <citation type="journal article" date="2007" name="J. Bacteriol.">
        <title>The complete genome sequence of Roseobacter denitrificans reveals a mixotrophic rather than photosynthetic metabolism.</title>
        <authorList>
            <person name="Swingley W.D."/>
            <person name="Sadekar S."/>
            <person name="Mastrian S.D."/>
            <person name="Matthies H.J."/>
            <person name="Hao J."/>
            <person name="Ramos H."/>
            <person name="Acharya C.R."/>
            <person name="Conrad A.L."/>
            <person name="Taylor H.L."/>
            <person name="Dejesa L.C."/>
            <person name="Shah M.K."/>
            <person name="O'Huallachain M.E."/>
            <person name="Lince M.T."/>
            <person name="Blankenship R.E."/>
            <person name="Beatty J.T."/>
            <person name="Touchman J.W."/>
        </authorList>
    </citation>
    <scope>NUCLEOTIDE SEQUENCE [LARGE SCALE GENOMIC DNA]</scope>
    <source>
        <strain>ATCC 33942 / OCh 114</strain>
    </source>
</reference>
<gene>
    <name evidence="1" type="primary">fluC</name>
    <name evidence="1" type="synonym">crcB</name>
    <name type="ordered locus">RD1_1440</name>
</gene>
<proteinExistence type="inferred from homology"/>
<dbReference type="EMBL" id="CP000362">
    <property type="protein sequence ID" value="ABG31078.1"/>
    <property type="status" value="ALT_INIT"/>
    <property type="molecule type" value="Genomic_DNA"/>
</dbReference>
<dbReference type="RefSeq" id="WP_011567698.1">
    <property type="nucleotide sequence ID" value="NZ_FOOO01000013.1"/>
</dbReference>
<dbReference type="SMR" id="Q16AB5"/>
<dbReference type="STRING" id="375451.RD1_1440"/>
<dbReference type="KEGG" id="rde:RD1_1440"/>
<dbReference type="eggNOG" id="COG0239">
    <property type="taxonomic scope" value="Bacteria"/>
</dbReference>
<dbReference type="HOGENOM" id="CLU_114342_2_3_5"/>
<dbReference type="OrthoDB" id="9806299at2"/>
<dbReference type="Proteomes" id="UP000007029">
    <property type="component" value="Chromosome"/>
</dbReference>
<dbReference type="GO" id="GO:0005886">
    <property type="term" value="C:plasma membrane"/>
    <property type="evidence" value="ECO:0007669"/>
    <property type="project" value="UniProtKB-SubCell"/>
</dbReference>
<dbReference type="GO" id="GO:0062054">
    <property type="term" value="F:fluoride channel activity"/>
    <property type="evidence" value="ECO:0007669"/>
    <property type="project" value="UniProtKB-UniRule"/>
</dbReference>
<dbReference type="GO" id="GO:0046872">
    <property type="term" value="F:metal ion binding"/>
    <property type="evidence" value="ECO:0007669"/>
    <property type="project" value="UniProtKB-KW"/>
</dbReference>
<dbReference type="GO" id="GO:0140114">
    <property type="term" value="P:cellular detoxification of fluoride"/>
    <property type="evidence" value="ECO:0007669"/>
    <property type="project" value="UniProtKB-UniRule"/>
</dbReference>
<dbReference type="HAMAP" id="MF_00454">
    <property type="entry name" value="FluC"/>
    <property type="match status" value="1"/>
</dbReference>
<dbReference type="InterPro" id="IPR003691">
    <property type="entry name" value="FluC"/>
</dbReference>
<dbReference type="NCBIfam" id="NF010805">
    <property type="entry name" value="PRK14209.1"/>
    <property type="match status" value="1"/>
</dbReference>
<dbReference type="PANTHER" id="PTHR28259">
    <property type="entry name" value="FLUORIDE EXPORT PROTEIN 1-RELATED"/>
    <property type="match status" value="1"/>
</dbReference>
<dbReference type="PANTHER" id="PTHR28259:SF1">
    <property type="entry name" value="FLUORIDE EXPORT PROTEIN 1-RELATED"/>
    <property type="match status" value="1"/>
</dbReference>
<dbReference type="Pfam" id="PF02537">
    <property type="entry name" value="CRCB"/>
    <property type="match status" value="1"/>
</dbReference>